<reference key="1">
    <citation type="journal article" date="2007" name="J. Bacteriol.">
        <title>Genome sequence of Avery's virulent serotype 2 strain D39 of Streptococcus pneumoniae and comparison with that of unencapsulated laboratory strain R6.</title>
        <authorList>
            <person name="Lanie J.A."/>
            <person name="Ng W.-L."/>
            <person name="Kazmierczak K.M."/>
            <person name="Andrzejewski T.M."/>
            <person name="Davidsen T.M."/>
            <person name="Wayne K.J."/>
            <person name="Tettelin H."/>
            <person name="Glass J.I."/>
            <person name="Winkler M.E."/>
        </authorList>
    </citation>
    <scope>NUCLEOTIDE SEQUENCE [LARGE SCALE GENOMIC DNA]</scope>
    <source>
        <strain>D39 / NCTC 7466</strain>
    </source>
</reference>
<accession>Q04KR0</accession>
<organism>
    <name type="scientific">Streptococcus pneumoniae serotype 2 (strain D39 / NCTC 7466)</name>
    <dbReference type="NCBI Taxonomy" id="373153"/>
    <lineage>
        <taxon>Bacteria</taxon>
        <taxon>Bacillati</taxon>
        <taxon>Bacillota</taxon>
        <taxon>Bacilli</taxon>
        <taxon>Lactobacillales</taxon>
        <taxon>Streptococcaceae</taxon>
        <taxon>Streptococcus</taxon>
    </lineage>
</organism>
<evidence type="ECO:0000255" key="1">
    <source>
        <dbReference type="HAMAP-Rule" id="MF_00051"/>
    </source>
</evidence>
<protein>
    <recommendedName>
        <fullName evidence="1">Serine hydroxymethyltransferase</fullName>
        <shortName evidence="1">SHMT</shortName>
        <shortName evidence="1">Serine methylase</shortName>
        <ecNumber evidence="1">2.1.2.1</ecNumber>
    </recommendedName>
</protein>
<feature type="chain" id="PRO_1000006327" description="Serine hydroxymethyltransferase">
    <location>
        <begin position="1"/>
        <end position="418"/>
    </location>
</feature>
<feature type="binding site" evidence="1">
    <location>
        <position position="121"/>
    </location>
    <ligand>
        <name>(6S)-5,6,7,8-tetrahydrofolate</name>
        <dbReference type="ChEBI" id="CHEBI:57453"/>
    </ligand>
</feature>
<feature type="binding site" evidence="1">
    <location>
        <begin position="125"/>
        <end position="127"/>
    </location>
    <ligand>
        <name>(6S)-5,6,7,8-tetrahydrofolate</name>
        <dbReference type="ChEBI" id="CHEBI:57453"/>
    </ligand>
</feature>
<feature type="binding site" evidence="1">
    <location>
        <position position="246"/>
    </location>
    <ligand>
        <name>(6S)-5,6,7,8-tetrahydrofolate</name>
        <dbReference type="ChEBI" id="CHEBI:57453"/>
    </ligand>
</feature>
<feature type="binding site" evidence="1">
    <location>
        <begin position="355"/>
        <end position="357"/>
    </location>
    <ligand>
        <name>(6S)-5,6,7,8-tetrahydrofolate</name>
        <dbReference type="ChEBI" id="CHEBI:57453"/>
    </ligand>
</feature>
<feature type="site" description="Plays an important role in substrate specificity" evidence="1">
    <location>
        <position position="229"/>
    </location>
</feature>
<feature type="modified residue" description="N6-(pyridoxal phosphate)lysine" evidence="1">
    <location>
        <position position="230"/>
    </location>
</feature>
<gene>
    <name evidence="1" type="primary">glyA</name>
    <name type="ordered locus">SPD_0910</name>
</gene>
<sequence>MIFDKDDFKAYDADLWNAIAKEEERQQNNIELIASENVVSKAVMAAQGSILTNKYAEGYPGRRYYGGTDVVDVVETLAIERAKEIFGAKFANVQPHSGSQANCAAYMSLIEPGDTVMGMDLAAGGHLTHGAPVSFSGQTYNFLSYSVDPETELLDFDAILKQAQEVKPKLIVAGASAYSQIIDFSKFREIADAVGAKLMVDMAHIAGLVAAGLHPSPVPYAHITTTTTHKTLRGPRGGLILTNDEELAKKINSAIFPGIQGGPLEHVVAAKAVSFKEVLDPAFKEYAANVIKNSKAMADVFLQDPDFRIISGGTENHLFLVDVTKVVENGKVAQNLLDEVNITLNKNSIPYETLSPFKTSGIRIGAAAITARGFGEEESRKVAELIIKTLKNSENEAVLEEVRSAVKELTDAFPLYED</sequence>
<name>GLYA_STRP2</name>
<comment type="function">
    <text evidence="1">Catalyzes the reversible interconversion of serine and glycine with tetrahydrofolate (THF) serving as the one-carbon carrier. This reaction serves as the major source of one-carbon groups required for the biosynthesis of purines, thymidylate, methionine, and other important biomolecules. Also exhibits THF-independent aldolase activity toward beta-hydroxyamino acids, producing glycine and aldehydes, via a retro-aldol mechanism.</text>
</comment>
<comment type="catalytic activity">
    <reaction evidence="1">
        <text>(6R)-5,10-methylene-5,6,7,8-tetrahydrofolate + glycine + H2O = (6S)-5,6,7,8-tetrahydrofolate + L-serine</text>
        <dbReference type="Rhea" id="RHEA:15481"/>
        <dbReference type="ChEBI" id="CHEBI:15377"/>
        <dbReference type="ChEBI" id="CHEBI:15636"/>
        <dbReference type="ChEBI" id="CHEBI:33384"/>
        <dbReference type="ChEBI" id="CHEBI:57305"/>
        <dbReference type="ChEBI" id="CHEBI:57453"/>
        <dbReference type="EC" id="2.1.2.1"/>
    </reaction>
</comment>
<comment type="cofactor">
    <cofactor evidence="1">
        <name>pyridoxal 5'-phosphate</name>
        <dbReference type="ChEBI" id="CHEBI:597326"/>
    </cofactor>
</comment>
<comment type="pathway">
    <text evidence="1">One-carbon metabolism; tetrahydrofolate interconversion.</text>
</comment>
<comment type="pathway">
    <text evidence="1">Amino-acid biosynthesis; glycine biosynthesis; glycine from L-serine: step 1/1.</text>
</comment>
<comment type="subunit">
    <text evidence="1">Homodimer.</text>
</comment>
<comment type="subcellular location">
    <subcellularLocation>
        <location evidence="1">Cytoplasm</location>
    </subcellularLocation>
</comment>
<comment type="similarity">
    <text evidence="1">Belongs to the SHMT family.</text>
</comment>
<keyword id="KW-0028">Amino-acid biosynthesis</keyword>
<keyword id="KW-0963">Cytoplasm</keyword>
<keyword id="KW-0554">One-carbon metabolism</keyword>
<keyword id="KW-0663">Pyridoxal phosphate</keyword>
<keyword id="KW-1185">Reference proteome</keyword>
<keyword id="KW-0808">Transferase</keyword>
<proteinExistence type="inferred from homology"/>
<dbReference type="EC" id="2.1.2.1" evidence="1"/>
<dbReference type="EMBL" id="CP000410">
    <property type="protein sequence ID" value="ABJ55301.1"/>
    <property type="molecule type" value="Genomic_DNA"/>
</dbReference>
<dbReference type="RefSeq" id="WP_000575515.1">
    <property type="nucleotide sequence ID" value="NZ_JAMLJR010000011.1"/>
</dbReference>
<dbReference type="SMR" id="Q04KR0"/>
<dbReference type="PaxDb" id="373153-SPD_0910"/>
<dbReference type="KEGG" id="spd:SPD_0910"/>
<dbReference type="eggNOG" id="COG0112">
    <property type="taxonomic scope" value="Bacteria"/>
</dbReference>
<dbReference type="HOGENOM" id="CLU_022477_2_1_9"/>
<dbReference type="BioCyc" id="SPNE373153:G1G6V-997-MONOMER"/>
<dbReference type="UniPathway" id="UPA00193"/>
<dbReference type="UniPathway" id="UPA00288">
    <property type="reaction ID" value="UER01023"/>
</dbReference>
<dbReference type="Proteomes" id="UP000001452">
    <property type="component" value="Chromosome"/>
</dbReference>
<dbReference type="GO" id="GO:0005829">
    <property type="term" value="C:cytosol"/>
    <property type="evidence" value="ECO:0007669"/>
    <property type="project" value="TreeGrafter"/>
</dbReference>
<dbReference type="GO" id="GO:0004372">
    <property type="term" value="F:glycine hydroxymethyltransferase activity"/>
    <property type="evidence" value="ECO:0007669"/>
    <property type="project" value="UniProtKB-UniRule"/>
</dbReference>
<dbReference type="GO" id="GO:0030170">
    <property type="term" value="F:pyridoxal phosphate binding"/>
    <property type="evidence" value="ECO:0007669"/>
    <property type="project" value="UniProtKB-UniRule"/>
</dbReference>
<dbReference type="GO" id="GO:0019264">
    <property type="term" value="P:glycine biosynthetic process from serine"/>
    <property type="evidence" value="ECO:0007669"/>
    <property type="project" value="UniProtKB-UniRule"/>
</dbReference>
<dbReference type="GO" id="GO:0035999">
    <property type="term" value="P:tetrahydrofolate interconversion"/>
    <property type="evidence" value="ECO:0007669"/>
    <property type="project" value="UniProtKB-UniRule"/>
</dbReference>
<dbReference type="CDD" id="cd00378">
    <property type="entry name" value="SHMT"/>
    <property type="match status" value="1"/>
</dbReference>
<dbReference type="FunFam" id="3.40.640.10:FF:000001">
    <property type="entry name" value="Serine hydroxymethyltransferase"/>
    <property type="match status" value="1"/>
</dbReference>
<dbReference type="FunFam" id="3.90.1150.10:FF:000072">
    <property type="entry name" value="Serine hydroxymethyltransferase"/>
    <property type="match status" value="1"/>
</dbReference>
<dbReference type="Gene3D" id="3.90.1150.10">
    <property type="entry name" value="Aspartate Aminotransferase, domain 1"/>
    <property type="match status" value="1"/>
</dbReference>
<dbReference type="Gene3D" id="3.40.640.10">
    <property type="entry name" value="Type I PLP-dependent aspartate aminotransferase-like (Major domain)"/>
    <property type="match status" value="1"/>
</dbReference>
<dbReference type="HAMAP" id="MF_00051">
    <property type="entry name" value="SHMT"/>
    <property type="match status" value="1"/>
</dbReference>
<dbReference type="InterPro" id="IPR015424">
    <property type="entry name" value="PyrdxlP-dep_Trfase"/>
</dbReference>
<dbReference type="InterPro" id="IPR015421">
    <property type="entry name" value="PyrdxlP-dep_Trfase_major"/>
</dbReference>
<dbReference type="InterPro" id="IPR015422">
    <property type="entry name" value="PyrdxlP-dep_Trfase_small"/>
</dbReference>
<dbReference type="InterPro" id="IPR001085">
    <property type="entry name" value="Ser_HO-MeTrfase"/>
</dbReference>
<dbReference type="InterPro" id="IPR049943">
    <property type="entry name" value="Ser_HO-MeTrfase-like"/>
</dbReference>
<dbReference type="InterPro" id="IPR019798">
    <property type="entry name" value="Ser_HO-MeTrfase_PLP_BS"/>
</dbReference>
<dbReference type="InterPro" id="IPR039429">
    <property type="entry name" value="SHMT-like_dom"/>
</dbReference>
<dbReference type="NCBIfam" id="NF000586">
    <property type="entry name" value="PRK00011.1"/>
    <property type="match status" value="1"/>
</dbReference>
<dbReference type="PANTHER" id="PTHR11680">
    <property type="entry name" value="SERINE HYDROXYMETHYLTRANSFERASE"/>
    <property type="match status" value="1"/>
</dbReference>
<dbReference type="PANTHER" id="PTHR11680:SF35">
    <property type="entry name" value="SERINE HYDROXYMETHYLTRANSFERASE 1"/>
    <property type="match status" value="1"/>
</dbReference>
<dbReference type="Pfam" id="PF00464">
    <property type="entry name" value="SHMT"/>
    <property type="match status" value="1"/>
</dbReference>
<dbReference type="PIRSF" id="PIRSF000412">
    <property type="entry name" value="SHMT"/>
    <property type="match status" value="1"/>
</dbReference>
<dbReference type="SUPFAM" id="SSF53383">
    <property type="entry name" value="PLP-dependent transferases"/>
    <property type="match status" value="1"/>
</dbReference>
<dbReference type="PROSITE" id="PS00096">
    <property type="entry name" value="SHMT"/>
    <property type="match status" value="1"/>
</dbReference>